<reference key="1">
    <citation type="journal article" date="2006" name="J. Bacteriol.">
        <title>Genome sequence of Aeromonas hydrophila ATCC 7966T: jack of all trades.</title>
        <authorList>
            <person name="Seshadri R."/>
            <person name="Joseph S.W."/>
            <person name="Chopra A.K."/>
            <person name="Sha J."/>
            <person name="Shaw J."/>
            <person name="Graf J."/>
            <person name="Haft D.H."/>
            <person name="Wu M."/>
            <person name="Ren Q."/>
            <person name="Rosovitz M.J."/>
            <person name="Madupu R."/>
            <person name="Tallon L."/>
            <person name="Kim M."/>
            <person name="Jin S."/>
            <person name="Vuong H."/>
            <person name="Stine O.C."/>
            <person name="Ali A."/>
            <person name="Horneman A.J."/>
            <person name="Heidelberg J.F."/>
        </authorList>
    </citation>
    <scope>NUCLEOTIDE SEQUENCE [LARGE SCALE GENOMIC DNA]</scope>
    <source>
        <strain>ATCC 7966 / DSM 30187 / BCRC 13018 / CCUG 14551 / JCM 1027 / KCTC 2358 / NCIMB 9240 / NCTC 8049</strain>
    </source>
</reference>
<proteinExistence type="inferred from homology"/>
<protein>
    <recommendedName>
        <fullName evidence="1">GTPase Obg</fullName>
        <ecNumber evidence="1">3.6.5.-</ecNumber>
    </recommendedName>
    <alternativeName>
        <fullName evidence="1">GTP-binding protein Obg</fullName>
    </alternativeName>
</protein>
<sequence length="400" mass="43892">MKFVDEVQIRVDAGDGGNGCVSFRREKYIPNGGPDGGDGGDGGDVYLVADENLNTLIDYRFERFHAAERGENGQSANCTGRRGKDRILRVPVGTRASDEDTGELLGDLTHHEQKLLVAKGGFHGLGNTRFKSSVNRAPRQKSNGTPGEVRTLKLELLLLADVGMLGLPNAGKSTFIRAVSAARPKVADYPFTTLVPNLGVVRGENSRSFVIADIPGLIEGAAEGAGLGIRFLKHLERCRVLIHLVDICPVDGSDPAENAVTIVRELEKYSPELASKPRWLVFNKMDLILEEEAQEVMDRVKTALNHEGPVYAITAISKEGTKKVCYDILDLLDTMPRQLAEDAKDAIEKVEFKWDDYHKNQLAKAEADALAASKAFDESLDDDEWDDEDDDGVEVIYVRD</sequence>
<evidence type="ECO:0000255" key="1">
    <source>
        <dbReference type="HAMAP-Rule" id="MF_01454"/>
    </source>
</evidence>
<evidence type="ECO:0000255" key="2">
    <source>
        <dbReference type="PROSITE-ProRule" id="PRU01231"/>
    </source>
</evidence>
<dbReference type="EC" id="3.6.5.-" evidence="1"/>
<dbReference type="EMBL" id="CP000462">
    <property type="protein sequence ID" value="ABK38314.1"/>
    <property type="molecule type" value="Genomic_DNA"/>
</dbReference>
<dbReference type="RefSeq" id="YP_855475.1">
    <property type="nucleotide sequence ID" value="NC_008570.1"/>
</dbReference>
<dbReference type="SMR" id="A0KGS9"/>
<dbReference type="STRING" id="380703.AHA_0932"/>
<dbReference type="EnsemblBacteria" id="ABK38314">
    <property type="protein sequence ID" value="ABK38314"/>
    <property type="gene ID" value="AHA_0932"/>
</dbReference>
<dbReference type="GeneID" id="4488418"/>
<dbReference type="KEGG" id="aha:AHA_0932"/>
<dbReference type="PATRIC" id="fig|380703.7.peg.932"/>
<dbReference type="eggNOG" id="COG0536">
    <property type="taxonomic scope" value="Bacteria"/>
</dbReference>
<dbReference type="HOGENOM" id="CLU_011747_2_0_6"/>
<dbReference type="OrthoDB" id="9807318at2"/>
<dbReference type="Proteomes" id="UP000000756">
    <property type="component" value="Chromosome"/>
</dbReference>
<dbReference type="GO" id="GO:0005737">
    <property type="term" value="C:cytoplasm"/>
    <property type="evidence" value="ECO:0007669"/>
    <property type="project" value="UniProtKB-SubCell"/>
</dbReference>
<dbReference type="GO" id="GO:0005525">
    <property type="term" value="F:GTP binding"/>
    <property type="evidence" value="ECO:0007669"/>
    <property type="project" value="UniProtKB-UniRule"/>
</dbReference>
<dbReference type="GO" id="GO:0003924">
    <property type="term" value="F:GTPase activity"/>
    <property type="evidence" value="ECO:0007669"/>
    <property type="project" value="UniProtKB-UniRule"/>
</dbReference>
<dbReference type="GO" id="GO:0000287">
    <property type="term" value="F:magnesium ion binding"/>
    <property type="evidence" value="ECO:0007669"/>
    <property type="project" value="InterPro"/>
</dbReference>
<dbReference type="GO" id="GO:0042254">
    <property type="term" value="P:ribosome biogenesis"/>
    <property type="evidence" value="ECO:0007669"/>
    <property type="project" value="UniProtKB-UniRule"/>
</dbReference>
<dbReference type="CDD" id="cd01898">
    <property type="entry name" value="Obg"/>
    <property type="match status" value="1"/>
</dbReference>
<dbReference type="FunFam" id="2.70.210.12:FF:000001">
    <property type="entry name" value="GTPase Obg"/>
    <property type="match status" value="1"/>
</dbReference>
<dbReference type="Gene3D" id="2.70.210.12">
    <property type="entry name" value="GTP1/OBG domain"/>
    <property type="match status" value="1"/>
</dbReference>
<dbReference type="Gene3D" id="3.40.50.300">
    <property type="entry name" value="P-loop containing nucleotide triphosphate hydrolases"/>
    <property type="match status" value="1"/>
</dbReference>
<dbReference type="HAMAP" id="MF_01454">
    <property type="entry name" value="GTPase_Obg"/>
    <property type="match status" value="1"/>
</dbReference>
<dbReference type="InterPro" id="IPR031167">
    <property type="entry name" value="G_OBG"/>
</dbReference>
<dbReference type="InterPro" id="IPR006073">
    <property type="entry name" value="GTP-bd"/>
</dbReference>
<dbReference type="InterPro" id="IPR014100">
    <property type="entry name" value="GTP-bd_Obg/CgtA"/>
</dbReference>
<dbReference type="InterPro" id="IPR006074">
    <property type="entry name" value="GTP1-OBG_CS"/>
</dbReference>
<dbReference type="InterPro" id="IPR006169">
    <property type="entry name" value="GTP1_OBG_dom"/>
</dbReference>
<dbReference type="InterPro" id="IPR036726">
    <property type="entry name" value="GTP1_OBG_dom_sf"/>
</dbReference>
<dbReference type="InterPro" id="IPR045086">
    <property type="entry name" value="OBG_GTPase"/>
</dbReference>
<dbReference type="InterPro" id="IPR027417">
    <property type="entry name" value="P-loop_NTPase"/>
</dbReference>
<dbReference type="NCBIfam" id="TIGR02729">
    <property type="entry name" value="Obg_CgtA"/>
    <property type="match status" value="1"/>
</dbReference>
<dbReference type="NCBIfam" id="NF008955">
    <property type="entry name" value="PRK12297.1"/>
    <property type="match status" value="1"/>
</dbReference>
<dbReference type="NCBIfam" id="NF008956">
    <property type="entry name" value="PRK12299.1"/>
    <property type="match status" value="1"/>
</dbReference>
<dbReference type="PANTHER" id="PTHR11702">
    <property type="entry name" value="DEVELOPMENTALLY REGULATED GTP-BINDING PROTEIN-RELATED"/>
    <property type="match status" value="1"/>
</dbReference>
<dbReference type="PANTHER" id="PTHR11702:SF31">
    <property type="entry name" value="MITOCHONDRIAL RIBOSOME-ASSOCIATED GTPASE 2"/>
    <property type="match status" value="1"/>
</dbReference>
<dbReference type="Pfam" id="PF01018">
    <property type="entry name" value="GTP1_OBG"/>
    <property type="match status" value="1"/>
</dbReference>
<dbReference type="Pfam" id="PF01926">
    <property type="entry name" value="MMR_HSR1"/>
    <property type="match status" value="1"/>
</dbReference>
<dbReference type="PIRSF" id="PIRSF002401">
    <property type="entry name" value="GTP_bd_Obg/CgtA"/>
    <property type="match status" value="1"/>
</dbReference>
<dbReference type="PRINTS" id="PR00326">
    <property type="entry name" value="GTP1OBG"/>
</dbReference>
<dbReference type="SUPFAM" id="SSF82051">
    <property type="entry name" value="Obg GTP-binding protein N-terminal domain"/>
    <property type="match status" value="1"/>
</dbReference>
<dbReference type="SUPFAM" id="SSF52540">
    <property type="entry name" value="P-loop containing nucleoside triphosphate hydrolases"/>
    <property type="match status" value="1"/>
</dbReference>
<dbReference type="PROSITE" id="PS51710">
    <property type="entry name" value="G_OBG"/>
    <property type="match status" value="1"/>
</dbReference>
<dbReference type="PROSITE" id="PS00905">
    <property type="entry name" value="GTP1_OBG"/>
    <property type="match status" value="1"/>
</dbReference>
<dbReference type="PROSITE" id="PS51883">
    <property type="entry name" value="OBG"/>
    <property type="match status" value="1"/>
</dbReference>
<comment type="function">
    <text evidence="1">An essential GTPase which binds GTP, GDP and possibly (p)ppGpp with moderate affinity, with high nucleotide exchange rates and a fairly low GTP hydrolysis rate. Plays a role in control of the cell cycle, stress response, ribosome biogenesis and in those bacteria that undergo differentiation, in morphogenesis control.</text>
</comment>
<comment type="cofactor">
    <cofactor evidence="1">
        <name>Mg(2+)</name>
        <dbReference type="ChEBI" id="CHEBI:18420"/>
    </cofactor>
</comment>
<comment type="subunit">
    <text evidence="1">Monomer.</text>
</comment>
<comment type="subcellular location">
    <subcellularLocation>
        <location evidence="1">Cytoplasm</location>
    </subcellularLocation>
</comment>
<comment type="similarity">
    <text evidence="1">Belongs to the TRAFAC class OBG-HflX-like GTPase superfamily. OBG GTPase family.</text>
</comment>
<organism>
    <name type="scientific">Aeromonas hydrophila subsp. hydrophila (strain ATCC 7966 / DSM 30187 / BCRC 13018 / CCUG 14551 / JCM 1027 / KCTC 2358 / NCIMB 9240 / NCTC 8049)</name>
    <dbReference type="NCBI Taxonomy" id="380703"/>
    <lineage>
        <taxon>Bacteria</taxon>
        <taxon>Pseudomonadati</taxon>
        <taxon>Pseudomonadota</taxon>
        <taxon>Gammaproteobacteria</taxon>
        <taxon>Aeromonadales</taxon>
        <taxon>Aeromonadaceae</taxon>
        <taxon>Aeromonas</taxon>
    </lineage>
</organism>
<gene>
    <name evidence="1" type="primary">obg</name>
    <name type="ordered locus">AHA_0932</name>
</gene>
<keyword id="KW-0963">Cytoplasm</keyword>
<keyword id="KW-0342">GTP-binding</keyword>
<keyword id="KW-0378">Hydrolase</keyword>
<keyword id="KW-0460">Magnesium</keyword>
<keyword id="KW-0479">Metal-binding</keyword>
<keyword id="KW-0547">Nucleotide-binding</keyword>
<keyword id="KW-1185">Reference proteome</keyword>
<name>OBG_AERHH</name>
<accession>A0KGS9</accession>
<feature type="chain" id="PRO_0000385676" description="GTPase Obg">
    <location>
        <begin position="1"/>
        <end position="400"/>
    </location>
</feature>
<feature type="domain" description="Obg" evidence="2">
    <location>
        <begin position="1"/>
        <end position="159"/>
    </location>
</feature>
<feature type="domain" description="OBG-type G" evidence="1">
    <location>
        <begin position="160"/>
        <end position="333"/>
    </location>
</feature>
<feature type="binding site" evidence="1">
    <location>
        <begin position="166"/>
        <end position="173"/>
    </location>
    <ligand>
        <name>GTP</name>
        <dbReference type="ChEBI" id="CHEBI:37565"/>
    </ligand>
</feature>
<feature type="binding site" evidence="1">
    <location>
        <position position="173"/>
    </location>
    <ligand>
        <name>Mg(2+)</name>
        <dbReference type="ChEBI" id="CHEBI:18420"/>
    </ligand>
</feature>
<feature type="binding site" evidence="1">
    <location>
        <begin position="191"/>
        <end position="195"/>
    </location>
    <ligand>
        <name>GTP</name>
        <dbReference type="ChEBI" id="CHEBI:37565"/>
    </ligand>
</feature>
<feature type="binding site" evidence="1">
    <location>
        <position position="193"/>
    </location>
    <ligand>
        <name>Mg(2+)</name>
        <dbReference type="ChEBI" id="CHEBI:18420"/>
    </ligand>
</feature>
<feature type="binding site" evidence="1">
    <location>
        <begin position="213"/>
        <end position="216"/>
    </location>
    <ligand>
        <name>GTP</name>
        <dbReference type="ChEBI" id="CHEBI:37565"/>
    </ligand>
</feature>
<feature type="binding site" evidence="1">
    <location>
        <begin position="283"/>
        <end position="286"/>
    </location>
    <ligand>
        <name>GTP</name>
        <dbReference type="ChEBI" id="CHEBI:37565"/>
    </ligand>
</feature>
<feature type="binding site" evidence="1">
    <location>
        <begin position="314"/>
        <end position="316"/>
    </location>
    <ligand>
        <name>GTP</name>
        <dbReference type="ChEBI" id="CHEBI:37565"/>
    </ligand>
</feature>